<name>CHI59_ARATH</name>
<comment type="catalytic activity">
    <reaction evidence="1">
        <text>Random endo-hydrolysis of N-acetyl-beta-D-glucosaminide (1-&gt;4)-beta-linkages in chitin and chitodextrins.</text>
        <dbReference type="EC" id="3.2.1.14"/>
    </reaction>
</comment>
<comment type="similarity">
    <text evidence="5">Belongs to the glycosyl hydrolase 19 family. Chitinase class I subfamily.</text>
</comment>
<protein>
    <recommendedName>
        <fullName evidence="5">Endochitinase At2g43590</fullName>
        <ecNumber>3.2.1.14</ecNumber>
    </recommendedName>
</protein>
<feature type="signal peptide" evidence="2">
    <location>
        <begin position="1"/>
        <end position="24"/>
    </location>
</feature>
<feature type="chain" id="PRO_0000433913" description="Endochitinase At2g43590" evidence="2">
    <location>
        <begin position="25"/>
        <end position="264"/>
    </location>
</feature>
<feature type="domain" description="Chitin-binding type-1" evidence="3">
    <location>
        <begin position="25"/>
        <end position="59"/>
    </location>
</feature>
<feature type="region of interest" description="Catalytic" evidence="1">
    <location>
        <begin position="66"/>
        <end position="264"/>
    </location>
</feature>
<feature type="active site" description="Proton donor" evidence="1">
    <location>
        <position position="128"/>
    </location>
</feature>
<feature type="glycosylation site" description="N-linked (GlcNAc...) asparagine" evidence="4">
    <location>
        <position position="261"/>
    </location>
</feature>
<feature type="disulfide bond" evidence="3">
    <location>
        <begin position="27"/>
        <end position="35"/>
    </location>
</feature>
<feature type="disulfide bond" evidence="3">
    <location>
        <begin position="29"/>
        <end position="41"/>
    </location>
</feature>
<feature type="disulfide bond" evidence="3">
    <location>
        <begin position="34"/>
        <end position="48"/>
    </location>
</feature>
<feature type="disulfide bond" evidence="3">
    <location>
        <begin position="52"/>
        <end position="57"/>
    </location>
</feature>
<evidence type="ECO:0000250" key="1">
    <source>
        <dbReference type="UniProtKB" id="P29022"/>
    </source>
</evidence>
<evidence type="ECO:0000255" key="2"/>
<evidence type="ECO:0000255" key="3">
    <source>
        <dbReference type="PROSITE-ProRule" id="PRU00261"/>
    </source>
</evidence>
<evidence type="ECO:0000255" key="4">
    <source>
        <dbReference type="PROSITE-ProRule" id="PRU00498"/>
    </source>
</evidence>
<evidence type="ECO:0000305" key="5"/>
<evidence type="ECO:0000312" key="6">
    <source>
        <dbReference type="EMBL" id="AEC10293.1"/>
    </source>
</evidence>
<evidence type="ECO:0000312" key="7">
    <source>
        <dbReference type="Proteomes" id="UP000006548"/>
    </source>
</evidence>
<keyword id="KW-0119">Carbohydrate metabolism</keyword>
<keyword id="KW-0146">Chitin degradation</keyword>
<keyword id="KW-0147">Chitin-binding</keyword>
<keyword id="KW-1015">Disulfide bond</keyword>
<keyword id="KW-0325">Glycoprotein</keyword>
<keyword id="KW-0326">Glycosidase</keyword>
<keyword id="KW-0378">Hydrolase</keyword>
<keyword id="KW-0611">Plant defense</keyword>
<keyword id="KW-0624">Polysaccharide degradation</keyword>
<keyword id="KW-1185">Reference proteome</keyword>
<keyword id="KW-0732">Signal</keyword>
<proteinExistence type="evidence at transcript level"/>
<gene>
    <name evidence="6" type="ordered locus">At2g43590</name>
    <name evidence="6" type="ORF">F18O19.30</name>
</gene>
<reference key="1">
    <citation type="journal article" date="1999" name="Nature">
        <title>Sequence and analysis of chromosome 2 of the plant Arabidopsis thaliana.</title>
        <authorList>
            <person name="Lin X."/>
            <person name="Kaul S."/>
            <person name="Rounsley S.D."/>
            <person name="Shea T.P."/>
            <person name="Benito M.-I."/>
            <person name="Town C.D."/>
            <person name="Fujii C.Y."/>
            <person name="Mason T.M."/>
            <person name="Bowman C.L."/>
            <person name="Barnstead M.E."/>
            <person name="Feldblyum T.V."/>
            <person name="Buell C.R."/>
            <person name="Ketchum K.A."/>
            <person name="Lee J.J."/>
            <person name="Ronning C.M."/>
            <person name="Koo H.L."/>
            <person name="Moffat K.S."/>
            <person name="Cronin L.A."/>
            <person name="Shen M."/>
            <person name="Pai G."/>
            <person name="Van Aken S."/>
            <person name="Umayam L."/>
            <person name="Tallon L.J."/>
            <person name="Gill J.E."/>
            <person name="Adams M.D."/>
            <person name="Carrera A.J."/>
            <person name="Creasy T.H."/>
            <person name="Goodman H.M."/>
            <person name="Somerville C.R."/>
            <person name="Copenhaver G.P."/>
            <person name="Preuss D."/>
            <person name="Nierman W.C."/>
            <person name="White O."/>
            <person name="Eisen J.A."/>
            <person name="Salzberg S.L."/>
            <person name="Fraser C.M."/>
            <person name="Venter J.C."/>
        </authorList>
    </citation>
    <scope>NUCLEOTIDE SEQUENCE [LARGE SCALE GENOMIC DNA]</scope>
    <source>
        <strain>cv. Columbia</strain>
    </source>
</reference>
<reference key="2">
    <citation type="journal article" date="2017" name="Plant J.">
        <title>Araport11: a complete reannotation of the Arabidopsis thaliana reference genome.</title>
        <authorList>
            <person name="Cheng C.Y."/>
            <person name="Krishnakumar V."/>
            <person name="Chan A.P."/>
            <person name="Thibaud-Nissen F."/>
            <person name="Schobel S."/>
            <person name="Town C.D."/>
        </authorList>
    </citation>
    <scope>GENOME REANNOTATION</scope>
    <source>
        <strain>cv. Columbia</strain>
    </source>
</reference>
<reference key="3">
    <citation type="journal article" date="2003" name="Science">
        <title>Empirical analysis of transcriptional activity in the Arabidopsis genome.</title>
        <authorList>
            <person name="Yamada K."/>
            <person name="Lim J."/>
            <person name="Dale J.M."/>
            <person name="Chen H."/>
            <person name="Shinn P."/>
            <person name="Palm C.J."/>
            <person name="Southwick A.M."/>
            <person name="Wu H.C."/>
            <person name="Kim C.J."/>
            <person name="Nguyen M."/>
            <person name="Pham P.K."/>
            <person name="Cheuk R.F."/>
            <person name="Karlin-Newmann G."/>
            <person name="Liu S.X."/>
            <person name="Lam B."/>
            <person name="Sakano H."/>
            <person name="Wu T."/>
            <person name="Yu G."/>
            <person name="Miranda M."/>
            <person name="Quach H.L."/>
            <person name="Tripp M."/>
            <person name="Chang C.H."/>
            <person name="Lee J.M."/>
            <person name="Toriumi M.J."/>
            <person name="Chan M.M."/>
            <person name="Tang C.C."/>
            <person name="Onodera C.S."/>
            <person name="Deng J.M."/>
            <person name="Akiyama K."/>
            <person name="Ansari Y."/>
            <person name="Arakawa T."/>
            <person name="Banh J."/>
            <person name="Banno F."/>
            <person name="Bowser L."/>
            <person name="Brooks S.Y."/>
            <person name="Carninci P."/>
            <person name="Chao Q."/>
            <person name="Choy N."/>
            <person name="Enju A."/>
            <person name="Goldsmith A.D."/>
            <person name="Gurjal M."/>
            <person name="Hansen N.F."/>
            <person name="Hayashizaki Y."/>
            <person name="Johnson-Hopson C."/>
            <person name="Hsuan V.W."/>
            <person name="Iida K."/>
            <person name="Karnes M."/>
            <person name="Khan S."/>
            <person name="Koesema E."/>
            <person name="Ishida J."/>
            <person name="Jiang P.X."/>
            <person name="Jones T."/>
            <person name="Kawai J."/>
            <person name="Kamiya A."/>
            <person name="Meyers C."/>
            <person name="Nakajima M."/>
            <person name="Narusaka M."/>
            <person name="Seki M."/>
            <person name="Sakurai T."/>
            <person name="Satou M."/>
            <person name="Tamse R."/>
            <person name="Vaysberg M."/>
            <person name="Wallender E.K."/>
            <person name="Wong C."/>
            <person name="Yamamura Y."/>
            <person name="Yuan S."/>
            <person name="Shinozaki K."/>
            <person name="Davis R.W."/>
            <person name="Theologis A."/>
            <person name="Ecker J.R."/>
        </authorList>
    </citation>
    <scope>NUCLEOTIDE SEQUENCE [LARGE SCALE MRNA]</scope>
    <source>
        <strain>cv. Columbia</strain>
    </source>
</reference>
<reference key="4">
    <citation type="submission" date="2006-07" db="EMBL/GenBank/DDBJ databases">
        <title>Large-scale analysis of RIKEN Arabidopsis full-length (RAFL) cDNAs.</title>
        <authorList>
            <person name="Totoki Y."/>
            <person name="Seki M."/>
            <person name="Ishida J."/>
            <person name="Nakajima M."/>
            <person name="Enju A."/>
            <person name="Kamiya A."/>
            <person name="Narusaka M."/>
            <person name="Shin-i T."/>
            <person name="Nakagawa M."/>
            <person name="Sakamoto N."/>
            <person name="Oishi K."/>
            <person name="Kohara Y."/>
            <person name="Kobayashi M."/>
            <person name="Toyoda A."/>
            <person name="Sakaki Y."/>
            <person name="Sakurai T."/>
            <person name="Iida K."/>
            <person name="Akiyama K."/>
            <person name="Satou M."/>
            <person name="Toyoda T."/>
            <person name="Konagaya A."/>
            <person name="Carninci P."/>
            <person name="Kawai J."/>
            <person name="Hayashizaki Y."/>
            <person name="Shinozaki K."/>
        </authorList>
    </citation>
    <scope>NUCLEOTIDE SEQUENCE [LARGE SCALE MRNA]</scope>
    <source>
        <strain>cv. Columbia</strain>
    </source>
</reference>
<reference key="5">
    <citation type="journal article" date="2001" name="Planta">
        <title>Expression pattern of the Arabidopsis thaliana AtEP3/AtchitIV endochitinase gene.</title>
        <authorList>
            <person name="Passarinho P.A."/>
            <person name="Van Hengel A.J."/>
            <person name="Fransz P.F."/>
            <person name="de Vries S.C."/>
        </authorList>
    </citation>
    <scope>GENE FAMILY</scope>
</reference>
<accession>O24658</accession>
<sequence>MAFTKISLVLLLCLLGFFSETVKSQNCGCAPNLCCSQFGYCGTDDAYCGVGCRSGPCRGSGTPTGGSVGSIVTQGFFNNIINQAGNGCAGKRFYTRDSFVNAANTFPNFANSVTRREIATMFAHFTHETGHFCYIEEINGATRNYCQSSNTQYPCAPGKGYFGRGPIQLSWNYNYGACGQSLGLDLLRQPELVGSNPTVAFRTGLWFWMNSVRPVLNQGFGATIRAINGMECNGGNSGAVNARIGYYRDYCGQLGVDPGPNLSC</sequence>
<organism evidence="7">
    <name type="scientific">Arabidopsis thaliana</name>
    <name type="common">Mouse-ear cress</name>
    <dbReference type="NCBI Taxonomy" id="3702"/>
    <lineage>
        <taxon>Eukaryota</taxon>
        <taxon>Viridiplantae</taxon>
        <taxon>Streptophyta</taxon>
        <taxon>Embryophyta</taxon>
        <taxon>Tracheophyta</taxon>
        <taxon>Spermatophyta</taxon>
        <taxon>Magnoliopsida</taxon>
        <taxon>eudicotyledons</taxon>
        <taxon>Gunneridae</taxon>
        <taxon>Pentapetalae</taxon>
        <taxon>rosids</taxon>
        <taxon>malvids</taxon>
        <taxon>Brassicales</taxon>
        <taxon>Brassicaceae</taxon>
        <taxon>Camelineae</taxon>
        <taxon>Arabidopsis</taxon>
    </lineage>
</organism>
<dbReference type="EC" id="3.2.1.14"/>
<dbReference type="EMBL" id="AC002333">
    <property type="protein sequence ID" value="AAB64047.1"/>
    <property type="molecule type" value="Genomic_DNA"/>
</dbReference>
<dbReference type="EMBL" id="AC002335">
    <property type="protein sequence ID" value="AAM14810.1"/>
    <property type="molecule type" value="Genomic_DNA"/>
</dbReference>
<dbReference type="EMBL" id="CP002685">
    <property type="protein sequence ID" value="AEC10293.1"/>
    <property type="molecule type" value="Genomic_DNA"/>
</dbReference>
<dbReference type="EMBL" id="BT009726">
    <property type="protein sequence ID" value="AAP88360.1"/>
    <property type="molecule type" value="mRNA"/>
</dbReference>
<dbReference type="EMBL" id="AK228181">
    <property type="protein sequence ID" value="BAF00136.1"/>
    <property type="molecule type" value="mRNA"/>
</dbReference>
<dbReference type="PIR" id="A84868">
    <property type="entry name" value="A84868"/>
</dbReference>
<dbReference type="RefSeq" id="NP_181887.1">
    <property type="nucleotide sequence ID" value="NM_129921.6"/>
</dbReference>
<dbReference type="SMR" id="O24658"/>
<dbReference type="FunCoup" id="O24658">
    <property type="interactions" value="152"/>
</dbReference>
<dbReference type="STRING" id="3702.O24658"/>
<dbReference type="CAZy" id="CBM18">
    <property type="family name" value="Carbohydrate-Binding Module Family 18"/>
</dbReference>
<dbReference type="CAZy" id="GH19">
    <property type="family name" value="Glycoside Hydrolase Family 19"/>
</dbReference>
<dbReference type="GlyGen" id="O24658">
    <property type="glycosylation" value="1 site"/>
</dbReference>
<dbReference type="PaxDb" id="3702-AT2G43590.1"/>
<dbReference type="ProteomicsDB" id="246598"/>
<dbReference type="EnsemblPlants" id="AT2G43590.1">
    <property type="protein sequence ID" value="AT2G43590.1"/>
    <property type="gene ID" value="AT2G43590"/>
</dbReference>
<dbReference type="GeneID" id="818961"/>
<dbReference type="Gramene" id="AT2G43590.1">
    <property type="protein sequence ID" value="AT2G43590.1"/>
    <property type="gene ID" value="AT2G43590"/>
</dbReference>
<dbReference type="KEGG" id="ath:AT2G43590"/>
<dbReference type="Araport" id="AT2G43590"/>
<dbReference type="TAIR" id="AT2G43590"/>
<dbReference type="eggNOG" id="KOG4742">
    <property type="taxonomic scope" value="Eukaryota"/>
</dbReference>
<dbReference type="HOGENOM" id="CLU_045506_1_1_1"/>
<dbReference type="InParanoid" id="O24658"/>
<dbReference type="OMA" id="HAYPRFA"/>
<dbReference type="OrthoDB" id="5985073at2759"/>
<dbReference type="PhylomeDB" id="O24658"/>
<dbReference type="BioCyc" id="ARA:AT2G43590-MONOMER"/>
<dbReference type="PRO" id="PR:O24658"/>
<dbReference type="Proteomes" id="UP000006548">
    <property type="component" value="Chromosome 2"/>
</dbReference>
<dbReference type="ExpressionAtlas" id="O24658">
    <property type="expression patterns" value="baseline and differential"/>
</dbReference>
<dbReference type="GO" id="GO:0099503">
    <property type="term" value="C:secretory vesicle"/>
    <property type="evidence" value="ECO:0007005"/>
    <property type="project" value="TAIR"/>
</dbReference>
<dbReference type="GO" id="GO:0008061">
    <property type="term" value="F:chitin binding"/>
    <property type="evidence" value="ECO:0007669"/>
    <property type="project" value="UniProtKB-KW"/>
</dbReference>
<dbReference type="GO" id="GO:0008843">
    <property type="term" value="F:endochitinase activity"/>
    <property type="evidence" value="ECO:0007669"/>
    <property type="project" value="UniProtKB-EC"/>
</dbReference>
<dbReference type="GO" id="GO:0016998">
    <property type="term" value="P:cell wall macromolecule catabolic process"/>
    <property type="evidence" value="ECO:0007669"/>
    <property type="project" value="InterPro"/>
</dbReference>
<dbReference type="GO" id="GO:0006032">
    <property type="term" value="P:chitin catabolic process"/>
    <property type="evidence" value="ECO:0007669"/>
    <property type="project" value="UniProtKB-KW"/>
</dbReference>
<dbReference type="GO" id="GO:0006952">
    <property type="term" value="P:defense response"/>
    <property type="evidence" value="ECO:0007669"/>
    <property type="project" value="UniProtKB-KW"/>
</dbReference>
<dbReference type="GO" id="GO:0000272">
    <property type="term" value="P:polysaccharide catabolic process"/>
    <property type="evidence" value="ECO:0007669"/>
    <property type="project" value="UniProtKB-KW"/>
</dbReference>
<dbReference type="CDD" id="cd00325">
    <property type="entry name" value="chitinase_GH19"/>
    <property type="match status" value="1"/>
</dbReference>
<dbReference type="CDD" id="cd00035">
    <property type="entry name" value="ChtBD1"/>
    <property type="match status" value="1"/>
</dbReference>
<dbReference type="FunFam" id="3.30.20.10:FF:000001">
    <property type="entry name" value="Endochitinase (Chitinase)"/>
    <property type="match status" value="1"/>
</dbReference>
<dbReference type="FunFam" id="3.30.60.10:FF:000004">
    <property type="entry name" value="Endochitinase At2g43590"/>
    <property type="match status" value="1"/>
</dbReference>
<dbReference type="Gene3D" id="1.10.530.10">
    <property type="match status" value="1"/>
</dbReference>
<dbReference type="Gene3D" id="3.30.20.10">
    <property type="entry name" value="Endochitinase, domain 2"/>
    <property type="match status" value="1"/>
</dbReference>
<dbReference type="Gene3D" id="3.30.60.10">
    <property type="entry name" value="Endochitinase-like"/>
    <property type="match status" value="1"/>
</dbReference>
<dbReference type="InterPro" id="IPR001002">
    <property type="entry name" value="Chitin-bd_1"/>
</dbReference>
<dbReference type="InterPro" id="IPR018371">
    <property type="entry name" value="Chitin-binding_1_CS"/>
</dbReference>
<dbReference type="InterPro" id="IPR036861">
    <property type="entry name" value="Endochitinase-like_sf"/>
</dbReference>
<dbReference type="InterPro" id="IPR016283">
    <property type="entry name" value="Glyco_hydro_19"/>
</dbReference>
<dbReference type="InterPro" id="IPR000726">
    <property type="entry name" value="Glyco_hydro_19_cat"/>
</dbReference>
<dbReference type="InterPro" id="IPR023346">
    <property type="entry name" value="Lysozyme-like_dom_sf"/>
</dbReference>
<dbReference type="PANTHER" id="PTHR22595:SF194">
    <property type="entry name" value="CHITINASE FAMILY PROTEIN"/>
    <property type="match status" value="1"/>
</dbReference>
<dbReference type="PANTHER" id="PTHR22595">
    <property type="entry name" value="CHITINASE-RELATED"/>
    <property type="match status" value="1"/>
</dbReference>
<dbReference type="Pfam" id="PF00187">
    <property type="entry name" value="Chitin_bind_1"/>
    <property type="match status" value="1"/>
</dbReference>
<dbReference type="Pfam" id="PF00182">
    <property type="entry name" value="Glyco_hydro_19"/>
    <property type="match status" value="2"/>
</dbReference>
<dbReference type="PIRSF" id="PIRSF001060">
    <property type="entry name" value="Endochitinase"/>
    <property type="match status" value="1"/>
</dbReference>
<dbReference type="SMART" id="SM00270">
    <property type="entry name" value="ChtBD1"/>
    <property type="match status" value="1"/>
</dbReference>
<dbReference type="SUPFAM" id="SSF53955">
    <property type="entry name" value="Lysozyme-like"/>
    <property type="match status" value="1"/>
</dbReference>
<dbReference type="SUPFAM" id="SSF57016">
    <property type="entry name" value="Plant lectins/antimicrobial peptides"/>
    <property type="match status" value="1"/>
</dbReference>
<dbReference type="PROSITE" id="PS00026">
    <property type="entry name" value="CHIT_BIND_I_1"/>
    <property type="match status" value="1"/>
</dbReference>
<dbReference type="PROSITE" id="PS50941">
    <property type="entry name" value="CHIT_BIND_I_2"/>
    <property type="match status" value="1"/>
</dbReference>
<dbReference type="PROSITE" id="PS00773">
    <property type="entry name" value="CHITINASE_19_1"/>
    <property type="match status" value="1"/>
</dbReference>
<dbReference type="PROSITE" id="PS00774">
    <property type="entry name" value="CHITINASE_19_2"/>
    <property type="match status" value="1"/>
</dbReference>